<name>HMR1_CAEEL</name>
<organism>
    <name type="scientific">Caenorhabditis elegans</name>
    <dbReference type="NCBI Taxonomy" id="6239"/>
    <lineage>
        <taxon>Eukaryota</taxon>
        <taxon>Metazoa</taxon>
        <taxon>Ecdysozoa</taxon>
        <taxon>Nematoda</taxon>
        <taxon>Chromadorea</taxon>
        <taxon>Rhabditida</taxon>
        <taxon>Rhabditina</taxon>
        <taxon>Rhabditomorpha</taxon>
        <taxon>Rhabditoidea</taxon>
        <taxon>Rhabditidae</taxon>
        <taxon>Peloderinae</taxon>
        <taxon>Caenorhabditis</taxon>
    </lineage>
</organism>
<gene>
    <name evidence="23" type="primary">hmr-1</name>
    <name evidence="23" type="ORF">W02B9.1</name>
</gene>
<reference key="1">
    <citation type="journal article" date="1998" name="J. Cell Biol.">
        <title>A putative catenin-cadherin system mediates morphogenesis of the Caenorhabditis elegans embryo.</title>
        <authorList>
            <person name="Costa M."/>
            <person name="Raich W."/>
            <person name="Agbunag C."/>
            <person name="Leung B."/>
            <person name="Hardin J."/>
            <person name="Priess J.R."/>
        </authorList>
    </citation>
    <scope>NUCLEOTIDE SEQUENCE [MRNA] (ISOFORM A)</scope>
    <scope>FUNCTION</scope>
    <scope>SUBCELLULAR LOCATION</scope>
    <scope>TISSUE SPECIFICITY</scope>
    <scope>DEVELOPMENTAL STAGE</scope>
    <scope>DISRUPTION PHENOTYPE</scope>
    <source>
        <strain>Bristol N2</strain>
    </source>
</reference>
<reference key="2">
    <citation type="journal article" date="2002" name="Curr. Biol.">
        <title>The C. elegans hmr-1 gene can encode a neuronal classic cadherin involved in the regulation of axon fasciculation.</title>
        <authorList>
            <person name="Broadbent I.D."/>
            <person name="Pettitt J."/>
        </authorList>
    </citation>
    <scope>NUCLEOTIDE SEQUENCE [MRNA] (ISOFORM B)</scope>
    <scope>FUNCTION</scope>
    <scope>TISSUE SPECIFICITY</scope>
    <source>
        <strain>Bristol N2</strain>
    </source>
</reference>
<reference key="3">
    <citation type="journal article" date="1998" name="Science">
        <title>Genome sequence of the nematode C. elegans: a platform for investigating biology.</title>
        <authorList>
            <consortium name="The C. elegans sequencing consortium"/>
        </authorList>
    </citation>
    <scope>NUCLEOTIDE SEQUENCE [LARGE SCALE GENOMIC DNA]</scope>
    <source>
        <strain>Bristol N2</strain>
    </source>
</reference>
<reference key="4">
    <citation type="journal article" date="2000" name="Nature">
        <title>Distinct beta-catenins mediate adhesion and signalling functions in C. elegans.</title>
        <authorList>
            <person name="Korswagen H.C."/>
            <person name="Herman M.A."/>
            <person name="Clevers H.C."/>
        </authorList>
    </citation>
    <scope>INTERACTION WITH HMP-2</scope>
</reference>
<reference key="5">
    <citation type="journal article" date="2003" name="J. Cell Biol.">
        <title>The Caenorhabditis elegans p120 catenin homologue, JAC-1, modulates cadherin-catenin function during epidermal morphogenesis.</title>
        <authorList>
            <person name="Pettitt J."/>
            <person name="Cox E.A."/>
            <person name="Broadbent I.D."/>
            <person name="Flett A."/>
            <person name="Hardin J."/>
        </authorList>
    </citation>
    <scope>FUNCTION</scope>
    <scope>INTERACTION WITH JAC-1</scope>
    <scope>SUBCELLULAR LOCATION</scope>
</reference>
<reference key="6">
    <citation type="journal article" date="2003" name="Nat. Biotechnol.">
        <title>Lectin affinity capture, isotope-coded tagging and mass spectrometry to identify N-linked glycoproteins.</title>
        <authorList>
            <person name="Kaji H."/>
            <person name="Saito H."/>
            <person name="Yamauchi Y."/>
            <person name="Shinkawa T."/>
            <person name="Taoka M."/>
            <person name="Hirabayashi J."/>
            <person name="Kasai K."/>
            <person name="Takahashi N."/>
            <person name="Isobe T."/>
        </authorList>
    </citation>
    <scope>GLYCOSYLATION [LARGE SCALE ANALYSIS] AT ASN-2623</scope>
    <scope>IDENTIFICATION BY MASS SPECTROMETRY</scope>
    <source>
        <strain>Bristol N2</strain>
    </source>
</reference>
<reference key="7">
    <citation type="journal article" date="2005" name="Glycobiology">
        <title>Identification of the hydrophobic glycoproteins of Caenorhabditis elegans.</title>
        <authorList>
            <person name="Fan X."/>
            <person name="She Y.-M."/>
            <person name="Bagshaw R.D."/>
            <person name="Callahan J.W."/>
            <person name="Schachter H."/>
            <person name="Mahuran D.J."/>
        </authorList>
    </citation>
    <scope>GLYCOSYLATION [LARGE SCALE ANALYSIS] AT ASN-2623</scope>
    <scope>IDENTIFICATION BY MASS SPECTROMETRY</scope>
</reference>
<reference key="8">
    <citation type="journal article" date="2010" name="Dev. Biol.">
        <title>SAX-7/L1CAM and HMR-1/cadherin function redundantly in blastomere compaction and non-muscle myosin accumulation during Caenorhabditis elegans gastrulation.</title>
        <authorList>
            <person name="Grana T.M."/>
            <person name="Cox E.A."/>
            <person name="Lynch A.M."/>
            <person name="Hardin J."/>
        </authorList>
    </citation>
    <scope>FUNCTION</scope>
    <scope>SUBCELLULAR LOCATION</scope>
</reference>
<reference key="9">
    <citation type="journal article" date="2010" name="Proc. Natl. Acad. Sci. U.S.A.">
        <title>In vitro and in vivo reconstitution of the cadherin-catenin-actin complex from Caenorhabditis elegans.</title>
        <authorList>
            <person name="Kwiatkowski A.V."/>
            <person name="Maiden S.L."/>
            <person name="Pokutta S."/>
            <person name="Choi H.J."/>
            <person name="Benjamin J.M."/>
            <person name="Lynch A.M."/>
            <person name="Nelson W.J."/>
            <person name="Weis W.I."/>
            <person name="Hardin J."/>
        </authorList>
    </citation>
    <scope>SUBUNIT</scope>
    <scope>INTERACTION WITH HMP-2</scope>
    <scope>SUBCELLULAR LOCATION</scope>
    <scope>DISRUPTION PHENOTYPE</scope>
</reference>
<reference key="10">
    <citation type="journal article" date="2012" name="Development">
        <title>An E-cadherin-mediated hitchhiking mechanism for C. elegans germ cell internalization during gastrulation.</title>
        <authorList>
            <person name="Chihara D."/>
            <person name="Nance J."/>
        </authorList>
    </citation>
    <scope>FUNCTION</scope>
    <scope>DEVELOPMENTAL STAGE</scope>
    <scope>DISRUPTION PHENOTYPE</scope>
</reference>
<reference key="11">
    <citation type="journal article" date="2015" name="Nat. Cell Biol.">
        <title>An instructive role for C. elegans E-cadherin in translating cell contact cues into cortical polarity.</title>
        <authorList>
            <person name="Klompstra D."/>
            <person name="Anderson D.C."/>
            <person name="Yeh J.Y."/>
            <person name="Zilberman Y."/>
            <person name="Nance J."/>
        </authorList>
    </citation>
    <scope>FUNCTION</scope>
    <scope>INTERACTION WITH JAC-1</scope>
    <scope>SUBCELLULAR LOCATION</scope>
    <scope>DEVELOPMENTAL STAGE</scope>
    <scope>DOMAIN</scope>
    <scope>DISRUPTION PHENOTYPE</scope>
</reference>
<reference key="12">
    <citation type="journal article" date="2015" name="Dev. Cell">
        <title>ULP-2 SUMO Protease Regulates E-Cadherin Recruitment to Adherens Junctions.</title>
        <authorList>
            <person name="Tsur A."/>
            <person name="Bening Abu-Shach U."/>
            <person name="Broday L."/>
        </authorList>
    </citation>
    <scope>INTERACTION WITH HMP-2</scope>
    <scope>SUBCELLULAR LOCATION</scope>
    <scope>SUMOYLATION</scope>
    <scope>MUTAGENESIS OF LYS-2845; LYS-2874; LYS-2882 AND LYS-2884</scope>
</reference>
<reference key="13">
    <citation type="journal article" date="2021" name="Dev. Biol.">
        <title>GRDN-1/Girdin regulates dendrite morphogenesis and cilium position in two specialized sensory neuron types in C. elegans.</title>
        <authorList>
            <person name="Nechipurenko I."/>
            <person name="Lavrentyeva S."/>
            <person name="Sengupta P."/>
        </authorList>
    </citation>
    <scope>SUBCELLULAR LOCATION</scope>
    <scope>DEVELOPMENTAL STAGE</scope>
</reference>
<reference key="14">
    <citation type="journal article" date="2015" name="Dev. Cell">
        <title>A conserved phosphorylation switch controls the interaction between cadherin and beta-catenin in vitro and in vivo.</title>
        <authorList>
            <person name="Choi H.J."/>
            <person name="Loveless T."/>
            <person name="Lynch A.M."/>
            <person name="Bang I."/>
            <person name="Hardin J."/>
            <person name="Weis W.I."/>
        </authorList>
    </citation>
    <scope>X-RAY CRYSTALLOGRAPHY (2.3 ANGSTROMS) OF 2841-2920 IN COMPLEX WITH HMP-2</scope>
    <scope>FUNCTION</scope>
    <scope>IDENTIFICATION IN CATENIN-CADHERIN COMPLEX</scope>
    <scope>SUBCELLULAR LOCATION</scope>
    <scope>DISRUPTION PHENOTYPE</scope>
    <scope>PHOSPHORYLATION AT SER-2839; SER-2909; THR-2912; SER-2915 AND SER-2918</scope>
    <scope>MUTAGENESIS OF SER-2909 AND THR-2912</scope>
</reference>
<keyword id="KW-0002">3D-structure</keyword>
<keyword id="KW-0025">Alternative splicing</keyword>
<keyword id="KW-0106">Calcium</keyword>
<keyword id="KW-0130">Cell adhesion</keyword>
<keyword id="KW-0965">Cell junction</keyword>
<keyword id="KW-1003">Cell membrane</keyword>
<keyword id="KW-0966">Cell projection</keyword>
<keyword id="KW-0217">Developmental protein</keyword>
<keyword id="KW-0221">Differentiation</keyword>
<keyword id="KW-1015">Disulfide bond</keyword>
<keyword id="KW-0245">EGF-like domain</keyword>
<keyword id="KW-0325">Glycoprotein</keyword>
<keyword id="KW-0472">Membrane</keyword>
<keyword id="KW-0524">Neurogenesis</keyword>
<keyword id="KW-0597">Phosphoprotein</keyword>
<keyword id="KW-1185">Reference proteome</keyword>
<keyword id="KW-0677">Repeat</keyword>
<keyword id="KW-0732">Signal</keyword>
<keyword id="KW-0812">Transmembrane</keyword>
<keyword id="KW-1133">Transmembrane helix</keyword>
<keyword id="KW-0832">Ubl conjugation</keyword>
<feature type="signal peptide" evidence="2">
    <location>
        <begin position="1"/>
        <end position="19"/>
    </location>
</feature>
<feature type="chain" id="PRO_0000268646" description="Cadherin-related hmr-1">
    <location>
        <begin position="20"/>
        <end position="2920"/>
    </location>
</feature>
<feature type="topological domain" description="Extracellular" evidence="2">
    <location>
        <begin position="20"/>
        <end position="2779"/>
    </location>
</feature>
<feature type="transmembrane region" description="Helical" evidence="2">
    <location>
        <begin position="2780"/>
        <end position="2800"/>
    </location>
</feature>
<feature type="topological domain" description="Cytoplasmic" evidence="2">
    <location>
        <begin position="2801"/>
        <end position="2920"/>
    </location>
</feature>
<feature type="domain" description="Cadherin 1" evidence="3">
    <location>
        <begin position="322"/>
        <end position="422"/>
    </location>
</feature>
<feature type="domain" description="Cadherin 2" evidence="3">
    <location>
        <begin position="425"/>
        <end position="530"/>
    </location>
</feature>
<feature type="domain" description="Cadherin 3" evidence="3">
    <location>
        <begin position="531"/>
        <end position="642"/>
    </location>
</feature>
<feature type="domain" description="Cadherin 4" evidence="3">
    <location>
        <begin position="643"/>
        <end position="747"/>
    </location>
</feature>
<feature type="domain" description="Cadherin 5" evidence="3">
    <location>
        <begin position="749"/>
        <end position="865"/>
    </location>
</feature>
<feature type="domain" description="Cadherin 6" evidence="3">
    <location>
        <begin position="871"/>
        <end position="979"/>
    </location>
</feature>
<feature type="domain" description="Cadherin 7" evidence="3">
    <location>
        <begin position="980"/>
        <end position="1093"/>
    </location>
</feature>
<feature type="domain" description="Cadherin 8" evidence="3">
    <location>
        <begin position="1097"/>
        <end position="1211"/>
    </location>
</feature>
<feature type="domain" description="Cadherin 9" evidence="3">
    <location>
        <begin position="1212"/>
        <end position="1335"/>
    </location>
</feature>
<feature type="domain" description="Cadherin 10" evidence="3">
    <location>
        <begin position="1336"/>
        <end position="1436"/>
    </location>
</feature>
<feature type="domain" description="Cadherin 11" evidence="3">
    <location>
        <begin position="1438"/>
        <end position="1546"/>
    </location>
</feature>
<feature type="domain" description="Cadherin 12" evidence="3">
    <location>
        <begin position="1548"/>
        <end position="1661"/>
    </location>
</feature>
<feature type="domain" description="Cadherin 13" evidence="3">
    <location>
        <begin position="1662"/>
        <end position="1772"/>
    </location>
</feature>
<feature type="domain" description="Cadherin 14" evidence="3">
    <location>
        <begin position="1772"/>
        <end position="1874"/>
    </location>
</feature>
<feature type="domain" description="EGF-like 1" evidence="4">
    <location>
        <begin position="2246"/>
        <end position="2283"/>
    </location>
</feature>
<feature type="domain" description="Laminin G-like" evidence="5">
    <location>
        <begin position="2284"/>
        <end position="2478"/>
    </location>
</feature>
<feature type="domain" description="EGF-like 2" evidence="4">
    <location>
        <begin position="2492"/>
        <end position="2527"/>
    </location>
</feature>
<feature type="region of interest" description="Disordered" evidence="6">
    <location>
        <begin position="2858"/>
        <end position="2891"/>
    </location>
</feature>
<feature type="compositionally biased region" description="Basic and acidic residues" evidence="6">
    <location>
        <begin position="2873"/>
        <end position="2887"/>
    </location>
</feature>
<feature type="modified residue" description="Phosphoserine" evidence="15">
    <location>
        <position position="2839"/>
    </location>
</feature>
<feature type="modified residue" description="Phosphoserine" evidence="15">
    <location>
        <position position="2909"/>
    </location>
</feature>
<feature type="modified residue" description="Phosphothreonine" evidence="15">
    <location>
        <position position="2912"/>
    </location>
</feature>
<feature type="modified residue" description="Phosphoserine" evidence="15">
    <location>
        <position position="2915"/>
    </location>
</feature>
<feature type="modified residue" description="Phosphoserine" evidence="15">
    <location>
        <position position="2918"/>
    </location>
</feature>
<feature type="glycosylation site" description="N-linked (GlcNAc...) asparagine" evidence="2">
    <location>
        <position position="72"/>
    </location>
</feature>
<feature type="glycosylation site" description="N-linked (GlcNAc...) asparagine" evidence="2">
    <location>
        <position position="243"/>
    </location>
</feature>
<feature type="glycosylation site" description="N-linked (GlcNAc...) asparagine" evidence="2">
    <location>
        <position position="253"/>
    </location>
</feature>
<feature type="glycosylation site" description="N-linked (GlcNAc...) asparagine" evidence="2">
    <location>
        <position position="339"/>
    </location>
</feature>
<feature type="glycosylation site" description="N-linked (GlcNAc...) asparagine" evidence="2">
    <location>
        <position position="508"/>
    </location>
</feature>
<feature type="glycosylation site" description="N-linked (GlcNAc...) asparagine" evidence="2">
    <location>
        <position position="658"/>
    </location>
</feature>
<feature type="glycosylation site" description="N-linked (GlcNAc...) asparagine" evidence="2">
    <location>
        <position position="685"/>
    </location>
</feature>
<feature type="glycosylation site" description="N-linked (GlcNAc...) asparagine" evidence="2">
    <location>
        <position position="715"/>
    </location>
</feature>
<feature type="glycosylation site" description="N-linked (GlcNAc...) asparagine" evidence="2">
    <location>
        <position position="826"/>
    </location>
</feature>
<feature type="glycosylation site" description="N-linked (GlcNAc...) asparagine" evidence="2">
    <location>
        <position position="1177"/>
    </location>
</feature>
<feature type="glycosylation site" description="N-linked (GlcNAc...) asparagine" evidence="2">
    <location>
        <position position="1417"/>
    </location>
</feature>
<feature type="glycosylation site" description="N-linked (GlcNAc...) asparagine" evidence="2">
    <location>
        <position position="1646"/>
    </location>
</feature>
<feature type="glycosylation site" description="N-linked (GlcNAc...) asparagine" evidence="2">
    <location>
        <position position="1935"/>
    </location>
</feature>
<feature type="glycosylation site" description="N-linked (GlcNAc...) asparagine" evidence="2">
    <location>
        <position position="2224"/>
    </location>
</feature>
<feature type="glycosylation site" description="N-linked (GlcNAc...) asparagine" evidence="2">
    <location>
        <position position="2232"/>
    </location>
</feature>
<feature type="glycosylation site" description="N-linked (GlcNAc...) asparagine" evidence="2">
    <location>
        <position position="2307"/>
    </location>
</feature>
<feature type="glycosylation site" description="N-linked (GlcNAc...) asparagine" evidence="2">
    <location>
        <position position="2332"/>
    </location>
</feature>
<feature type="glycosylation site" description="N-linked (GlcNAc...) asparagine" evidence="9 11">
    <location>
        <position position="2623"/>
    </location>
</feature>
<feature type="disulfide bond" evidence="1">
    <location>
        <begin position="2250"/>
        <end position="2261"/>
    </location>
</feature>
<feature type="disulfide bond" evidence="1">
    <location>
        <begin position="2255"/>
        <end position="2270"/>
    </location>
</feature>
<feature type="disulfide bond" evidence="1">
    <location>
        <begin position="2272"/>
        <end position="2282"/>
    </location>
</feature>
<feature type="disulfide bond" evidence="1">
    <location>
        <begin position="2452"/>
        <end position="2478"/>
    </location>
</feature>
<feature type="disulfide bond" evidence="1">
    <location>
        <begin position="2501"/>
        <end position="2515"/>
    </location>
</feature>
<feature type="disulfide bond" evidence="1">
    <location>
        <begin position="2517"/>
        <end position="2526"/>
    </location>
</feature>
<feature type="splice variant" id="VSP_044152" description="In isoform e." evidence="21">
    <location>
        <begin position="1"/>
        <end position="1986"/>
    </location>
</feature>
<feature type="splice variant" id="VSP_044151" description="In isoform d." evidence="21">
    <location>
        <begin position="1"/>
        <end position="1856"/>
    </location>
</feature>
<feature type="splice variant" id="VSP_021978" description="In isoform a." evidence="20">
    <location>
        <begin position="1"/>
        <end position="1651"/>
    </location>
</feature>
<feature type="splice variant" id="VSP_021979" description="In isoform a." evidence="20">
    <original>TDMNDNAPFFEKTRYEGSVEETAPIGAAVMSFSAFDADEEAKDNVFTYQLSEESDYFYVTTDKDSKQSSVGVLRVKQPLDYEDVTQRDGFHLGIRVSDGRHDAEAAVHVALVDRNDHAPHIHGATEHRVREDVPRGTSIGRYTATDRDAGDTAR</original>
    <variation>MQKRRCTWHSSIATTTRHTFTEPQNTESERTCHVEQALDDTRQRIGMPETRQGRSSRGNCVIFGSSKRLWVTLLGFCFVLSTLIGGAEAFTDLSLPFGLEPSVAKSRFSSLVGGVRARDIHVFVMKNISEDTPVGTVLETFKAHDPSNPMYNFS</variation>
    <location>
        <begin position="1652"/>
        <end position="1805"/>
    </location>
</feature>
<feature type="mutagenesis site" description="No obvious phenotype." evidence="17">
    <original>K</original>
    <variation>R</variation>
    <location>
        <position position="2845"/>
    </location>
</feature>
<feature type="mutagenesis site" description="No obvious phenotype. No sumoylation; when associated with R-2882 and R-2884." evidence="17">
    <original>K</original>
    <variation>R</variation>
    <location>
        <position position="2874"/>
    </location>
</feature>
<feature type="mutagenesis site" description="No sumoylation; when associated with R-2874 and R-2884." evidence="17">
    <original>K</original>
    <variation>R</variation>
    <location>
        <position position="2882"/>
    </location>
</feature>
<feature type="mutagenesis site" description="No sumoylation; when associated with R-2874 and R-2882." evidence="17">
    <original>K</original>
    <variation>R</variation>
    <location>
        <position position="2884"/>
    </location>
</feature>
<feature type="mutagenesis site" description="Results in no phosphorylation at S-2909, T-2912, S-2915 and S-2918. Retains ability to bind to hmp-2." evidence="15">
    <original>S</original>
    <variation>A</variation>
    <location>
        <position position="2909"/>
    </location>
</feature>
<feature type="mutagenesis site" description="Results in no phosphorylation at S-2915 and S-2918. Upon phosphorylation by kin-19, there is increased binding to hmp-2." evidence="15">
    <original>T</original>
    <variation>A</variation>
    <location>
        <position position="2912"/>
    </location>
</feature>
<feature type="strand" evidence="26">
    <location>
        <begin position="2844"/>
        <end position="2847"/>
    </location>
</feature>
<feature type="helix" evidence="26">
    <location>
        <begin position="2877"/>
        <end position="2888"/>
    </location>
</feature>
<feature type="helix" evidence="26">
    <location>
        <begin position="2890"/>
        <end position="2892"/>
    </location>
</feature>
<feature type="strand" evidence="26">
    <location>
        <begin position="2896"/>
        <end position="2899"/>
    </location>
</feature>
<proteinExistence type="evidence at protein level"/>
<dbReference type="EMBL" id="AF016854">
    <property type="protein sequence ID" value="AAB94553.1"/>
    <property type="status" value="ALT_INIT"/>
    <property type="molecule type" value="mRNA"/>
</dbReference>
<dbReference type="EMBL" id="AJ307058">
    <property type="protein sequence ID" value="CAC38842.1"/>
    <property type="molecule type" value="mRNA"/>
</dbReference>
<dbReference type="EMBL" id="BX284601">
    <property type="protein sequence ID" value="CAB61036.2"/>
    <property type="molecule type" value="Genomic_DNA"/>
</dbReference>
<dbReference type="EMBL" id="BX284601">
    <property type="protein sequence ID" value="CAD27611.1"/>
    <property type="molecule type" value="Genomic_DNA"/>
</dbReference>
<dbReference type="EMBL" id="AL032638">
    <property type="protein sequence ID" value="CAD27611.1"/>
    <property type="status" value="JOINED"/>
    <property type="molecule type" value="Genomic_DNA"/>
</dbReference>
<dbReference type="EMBL" id="Z82093">
    <property type="protein sequence ID" value="CAD27611.1"/>
    <property type="status" value="JOINED"/>
    <property type="molecule type" value="Genomic_DNA"/>
</dbReference>
<dbReference type="EMBL" id="BX284601">
    <property type="protein sequence ID" value="CCF23411.1"/>
    <property type="molecule type" value="Genomic_DNA"/>
</dbReference>
<dbReference type="EMBL" id="BX284601">
    <property type="protein sequence ID" value="CCF23412.1"/>
    <property type="molecule type" value="Genomic_DNA"/>
</dbReference>
<dbReference type="RefSeq" id="NP_001021649.2">
    <property type="nucleotide sequence ID" value="NM_001026478.3"/>
</dbReference>
<dbReference type="RefSeq" id="NP_001021650.1">
    <molecule id="Q967F4-1"/>
    <property type="nucleotide sequence ID" value="NM_001026479.4"/>
</dbReference>
<dbReference type="RefSeq" id="NP_001251561.1">
    <molecule id="Q967F4-4"/>
    <property type="nucleotide sequence ID" value="NM_001264632.3"/>
</dbReference>
<dbReference type="RefSeq" id="NP_001251562.1">
    <property type="nucleotide sequence ID" value="NM_001264633.1"/>
</dbReference>
<dbReference type="RefSeq" id="NP_001368105.1">
    <molecule id="Q967F4-5"/>
    <property type="nucleotide sequence ID" value="NM_001381216.1"/>
</dbReference>
<dbReference type="RefSeq" id="NP_001379266.1">
    <molecule id="Q967F4-2"/>
    <property type="nucleotide sequence ID" value="NM_001392947.1"/>
</dbReference>
<dbReference type="PDB" id="4R10">
    <property type="method" value="X-ray"/>
    <property type="resolution" value="2.30 A"/>
    <property type="chains" value="B=2841-2920"/>
</dbReference>
<dbReference type="PDB" id="4R11">
    <property type="method" value="X-ray"/>
    <property type="resolution" value="2.79 A"/>
    <property type="chains" value="B/D/F=2841-2920"/>
</dbReference>
<dbReference type="PDBsum" id="4R10"/>
<dbReference type="PDBsum" id="4R11"/>
<dbReference type="SMR" id="Q967F4"/>
<dbReference type="BioGRID" id="38416">
    <property type="interactions" value="12"/>
</dbReference>
<dbReference type="ComplexPortal" id="CPX-499">
    <property type="entry name" value="Catenin-Cadherin complex"/>
</dbReference>
<dbReference type="DIP" id="DIP-56285N"/>
<dbReference type="FunCoup" id="Q967F4">
    <property type="interactions" value="70"/>
</dbReference>
<dbReference type="IntAct" id="Q967F4">
    <property type="interactions" value="10"/>
</dbReference>
<dbReference type="STRING" id="6239.W02B9.1b.1"/>
<dbReference type="GlyCosmos" id="Q967F4">
    <property type="glycosylation" value="18 sites, No reported glycans"/>
</dbReference>
<dbReference type="iPTMnet" id="Q967F4"/>
<dbReference type="PaxDb" id="6239-W02B9.1b"/>
<dbReference type="PeptideAtlas" id="Q967F4"/>
<dbReference type="EnsemblMetazoa" id="W02B9.1a.1">
    <molecule id="Q967F4-2"/>
    <property type="protein sequence ID" value="W02B9.1a.1"/>
    <property type="gene ID" value="WBGene00001980"/>
</dbReference>
<dbReference type="EnsemblMetazoa" id="W02B9.1a.2">
    <molecule id="Q967F4-2"/>
    <property type="protein sequence ID" value="W02B9.1a.2"/>
    <property type="gene ID" value="WBGene00001980"/>
</dbReference>
<dbReference type="EnsemblMetazoa" id="W02B9.1b.1">
    <molecule id="Q967F4-1"/>
    <property type="protein sequence ID" value="W02B9.1b.1"/>
    <property type="gene ID" value="WBGene00001980"/>
</dbReference>
<dbReference type="EnsemblMetazoa" id="W02B9.1d.1">
    <molecule id="Q967F4-4"/>
    <property type="protein sequence ID" value="W02B9.1d.1"/>
    <property type="gene ID" value="WBGene00001980"/>
</dbReference>
<dbReference type="EnsemblMetazoa" id="W02B9.1e.1">
    <molecule id="Q967F4-5"/>
    <property type="protein sequence ID" value="W02B9.1e.1"/>
    <property type="gene ID" value="WBGene00001980"/>
</dbReference>
<dbReference type="GeneID" id="173007"/>
<dbReference type="KEGG" id="cel:CELE_W02B9.1"/>
<dbReference type="UCSC" id="W02B9.1b">
    <molecule id="Q967F4-1"/>
    <property type="organism name" value="c. elegans"/>
</dbReference>
<dbReference type="AGR" id="WB:WBGene00001980"/>
<dbReference type="CTD" id="173007"/>
<dbReference type="WormBase" id="W02B9.1a">
    <molecule id="Q967F4-2"/>
    <property type="protein sequence ID" value="CE46853"/>
    <property type="gene ID" value="WBGene00001980"/>
    <property type="gene designation" value="hmr-1"/>
</dbReference>
<dbReference type="WormBase" id="W02B9.1b">
    <molecule id="Q967F4-1"/>
    <property type="protein sequence ID" value="CE30357"/>
    <property type="gene ID" value="WBGene00001980"/>
    <property type="gene designation" value="hmr-1"/>
</dbReference>
<dbReference type="WormBase" id="W02B9.1d">
    <molecule id="Q967F4-4"/>
    <property type="protein sequence ID" value="CE46949"/>
    <property type="gene ID" value="WBGene00001980"/>
    <property type="gene designation" value="hmr-1"/>
</dbReference>
<dbReference type="WormBase" id="W02B9.1e">
    <molecule id="Q967F4-5"/>
    <property type="protein sequence ID" value="CE47071"/>
    <property type="gene ID" value="WBGene00001980"/>
    <property type="gene designation" value="hmr-1"/>
</dbReference>
<dbReference type="eggNOG" id="KOG3594">
    <property type="taxonomic scope" value="Eukaryota"/>
</dbReference>
<dbReference type="GeneTree" id="ENSGT00940000168029"/>
<dbReference type="HOGENOM" id="CLU_000347_1_0_1"/>
<dbReference type="InParanoid" id="Q967F4"/>
<dbReference type="OMA" id="PYHTSQK"/>
<dbReference type="OrthoDB" id="6079678at2759"/>
<dbReference type="PhylomeDB" id="Q967F4"/>
<dbReference type="SignaLink" id="Q967F4"/>
<dbReference type="EvolutionaryTrace" id="Q967F4"/>
<dbReference type="PRO" id="PR:Q967F4"/>
<dbReference type="Proteomes" id="UP000001940">
    <property type="component" value="Chromosome I"/>
</dbReference>
<dbReference type="Bgee" id="WBGene00001980">
    <property type="expression patterns" value="Expressed in pharyngeal muscle cell (C elegans) and 4 other cell types or tissues"/>
</dbReference>
<dbReference type="GO" id="GO:0005912">
    <property type="term" value="C:adherens junction"/>
    <property type="evidence" value="ECO:0000314"/>
    <property type="project" value="WormBase"/>
</dbReference>
<dbReference type="GO" id="GO:0016342">
    <property type="term" value="C:catenin complex"/>
    <property type="evidence" value="ECO:0000314"/>
    <property type="project" value="WormBase"/>
</dbReference>
<dbReference type="GO" id="GO:0150002">
    <property type="term" value="C:distal dendrite"/>
    <property type="evidence" value="ECO:0000314"/>
    <property type="project" value="UniProtKB"/>
</dbReference>
<dbReference type="GO" id="GO:0005886">
    <property type="term" value="C:plasma membrane"/>
    <property type="evidence" value="ECO:0000314"/>
    <property type="project" value="WormBase"/>
</dbReference>
<dbReference type="GO" id="GO:0008013">
    <property type="term" value="F:beta-catenin binding"/>
    <property type="evidence" value="ECO:0000353"/>
    <property type="project" value="WormBase"/>
</dbReference>
<dbReference type="GO" id="GO:0005509">
    <property type="term" value="F:calcium ion binding"/>
    <property type="evidence" value="ECO:0007669"/>
    <property type="project" value="InterPro"/>
</dbReference>
<dbReference type="GO" id="GO:0070097">
    <property type="term" value="F:delta-catenin binding"/>
    <property type="evidence" value="ECO:0000353"/>
    <property type="project" value="WormBase"/>
</dbReference>
<dbReference type="GO" id="GO:0003384">
    <property type="term" value="P:apical constriction involved in gastrulation"/>
    <property type="evidence" value="ECO:0000316"/>
    <property type="project" value="WormBase"/>
</dbReference>
<dbReference type="GO" id="GO:0016477">
    <property type="term" value="P:cell migration"/>
    <property type="evidence" value="ECO:0000315"/>
    <property type="project" value="WormBase"/>
</dbReference>
<dbReference type="GO" id="GO:0042074">
    <property type="term" value="P:cell migration involved in gastrulation"/>
    <property type="evidence" value="ECO:0000316"/>
    <property type="project" value="WormBase"/>
</dbReference>
<dbReference type="GO" id="GO:0098609">
    <property type="term" value="P:cell-cell adhesion"/>
    <property type="evidence" value="ECO:0000318"/>
    <property type="project" value="GO_Central"/>
</dbReference>
<dbReference type="GO" id="GO:0044331">
    <property type="term" value="P:cell-cell adhesion mediated by cadherin"/>
    <property type="evidence" value="ECO:0000269"/>
    <property type="project" value="ComplexPortal"/>
</dbReference>
<dbReference type="GO" id="GO:0030866">
    <property type="term" value="P:cortical actin cytoskeleton organization"/>
    <property type="evidence" value="ECO:0000315"/>
    <property type="project" value="WormBase"/>
</dbReference>
<dbReference type="GO" id="GO:0009792">
    <property type="term" value="P:embryo development ending in birth or egg hatching"/>
    <property type="evidence" value="ECO:0000315"/>
    <property type="project" value="WormBase"/>
</dbReference>
<dbReference type="GO" id="GO:0000132">
    <property type="term" value="P:establishment of mitotic spindle orientation"/>
    <property type="evidence" value="ECO:0000315"/>
    <property type="project" value="WormBase"/>
</dbReference>
<dbReference type="GO" id="GO:0007369">
    <property type="term" value="P:gastrulation"/>
    <property type="evidence" value="ECO:0000316"/>
    <property type="project" value="WormBase"/>
</dbReference>
<dbReference type="GO" id="GO:0007156">
    <property type="term" value="P:homophilic cell adhesion via plasma membrane adhesion molecules"/>
    <property type="evidence" value="ECO:0007669"/>
    <property type="project" value="InterPro"/>
</dbReference>
<dbReference type="GO" id="GO:0007399">
    <property type="term" value="P:nervous system development"/>
    <property type="evidence" value="ECO:0007669"/>
    <property type="project" value="UniProtKB-KW"/>
</dbReference>
<dbReference type="CDD" id="cd11304">
    <property type="entry name" value="Cadherin_repeat"/>
    <property type="match status" value="13"/>
</dbReference>
<dbReference type="CDD" id="cd00054">
    <property type="entry name" value="EGF_CA"/>
    <property type="match status" value="1"/>
</dbReference>
<dbReference type="CDD" id="cd00110">
    <property type="entry name" value="LamG"/>
    <property type="match status" value="1"/>
</dbReference>
<dbReference type="FunFam" id="2.60.120.200:FF:000296">
    <property type="entry name" value="Cadherin-related hmr-1"/>
    <property type="match status" value="1"/>
</dbReference>
<dbReference type="FunFam" id="2.60.40.60:FF:000339">
    <property type="entry name" value="Cadherin-related hmr-1"/>
    <property type="match status" value="1"/>
</dbReference>
<dbReference type="FunFam" id="2.60.40.60:FF:000374">
    <property type="entry name" value="Cadherin-related hmr-1"/>
    <property type="match status" value="1"/>
</dbReference>
<dbReference type="FunFam" id="2.60.40.60:FF:000416">
    <property type="entry name" value="Cadherin-related hmr-1"/>
    <property type="match status" value="1"/>
</dbReference>
<dbReference type="FunFam" id="2.60.40.60:FF:000457">
    <property type="entry name" value="Cadherin-related hmr-1"/>
    <property type="match status" value="1"/>
</dbReference>
<dbReference type="FunFam" id="2.60.40.60:FF:000511">
    <property type="entry name" value="Cadherin-related hmr-1"/>
    <property type="match status" value="1"/>
</dbReference>
<dbReference type="FunFam" id="2.60.40.60:FF:000551">
    <property type="entry name" value="Cadherin-related hmr-1"/>
    <property type="match status" value="1"/>
</dbReference>
<dbReference type="FunFam" id="2.60.40.60:FF:000552">
    <property type="entry name" value="Cadherin-related hmr-1"/>
    <property type="match status" value="1"/>
</dbReference>
<dbReference type="FunFam" id="2.60.40.60:FF:000192">
    <property type="entry name" value="neural-cadherin isoform X8"/>
    <property type="match status" value="1"/>
</dbReference>
<dbReference type="FunFam" id="2.10.25.10:FF:000909">
    <property type="entry name" value="Notch receptor 2"/>
    <property type="match status" value="1"/>
</dbReference>
<dbReference type="Gene3D" id="2.60.120.200">
    <property type="match status" value="2"/>
</dbReference>
<dbReference type="Gene3D" id="2.60.40.60">
    <property type="entry name" value="Cadherins"/>
    <property type="match status" value="14"/>
</dbReference>
<dbReference type="Gene3D" id="2.10.25.10">
    <property type="entry name" value="Laminin"/>
    <property type="match status" value="2"/>
</dbReference>
<dbReference type="InterPro" id="IPR039808">
    <property type="entry name" value="Cadherin"/>
</dbReference>
<dbReference type="InterPro" id="IPR002126">
    <property type="entry name" value="Cadherin-like_dom"/>
</dbReference>
<dbReference type="InterPro" id="IPR015919">
    <property type="entry name" value="Cadherin-like_sf"/>
</dbReference>
<dbReference type="InterPro" id="IPR020894">
    <property type="entry name" value="Cadherin_CS"/>
</dbReference>
<dbReference type="InterPro" id="IPR013320">
    <property type="entry name" value="ConA-like_dom_sf"/>
</dbReference>
<dbReference type="InterPro" id="IPR018247">
    <property type="entry name" value="EF_Hand_1_Ca_BS"/>
</dbReference>
<dbReference type="InterPro" id="IPR000742">
    <property type="entry name" value="EGF-like_dom"/>
</dbReference>
<dbReference type="InterPro" id="IPR000152">
    <property type="entry name" value="EGF-type_Asp/Asn_hydroxyl_site"/>
</dbReference>
<dbReference type="InterPro" id="IPR056448">
    <property type="entry name" value="EGF_Hmr-1"/>
</dbReference>
<dbReference type="InterPro" id="IPR054522">
    <property type="entry name" value="Hmr1_C"/>
</dbReference>
<dbReference type="InterPro" id="IPR001791">
    <property type="entry name" value="Laminin_G"/>
</dbReference>
<dbReference type="InterPro" id="IPR056370">
    <property type="entry name" value="Shg-like_Ig-like"/>
</dbReference>
<dbReference type="PANTHER" id="PTHR24027:SF422">
    <property type="entry name" value="CADHERIN DOMAIN-CONTAINING PROTEIN"/>
    <property type="match status" value="1"/>
</dbReference>
<dbReference type="PANTHER" id="PTHR24027">
    <property type="entry name" value="CADHERIN-23"/>
    <property type="match status" value="1"/>
</dbReference>
<dbReference type="Pfam" id="PF00028">
    <property type="entry name" value="Cadherin"/>
    <property type="match status" value="8"/>
</dbReference>
<dbReference type="Pfam" id="PF24613">
    <property type="entry name" value="EGF_Hmr-1"/>
    <property type="match status" value="1"/>
</dbReference>
<dbReference type="Pfam" id="PF22417">
    <property type="entry name" value="Hmr1_E-cad-like"/>
    <property type="match status" value="1"/>
</dbReference>
<dbReference type="Pfam" id="PF24811">
    <property type="entry name" value="Ig_Shg"/>
    <property type="match status" value="1"/>
</dbReference>
<dbReference type="Pfam" id="PF02210">
    <property type="entry name" value="Laminin_G_2"/>
    <property type="match status" value="1"/>
</dbReference>
<dbReference type="PRINTS" id="PR00205">
    <property type="entry name" value="CADHERIN"/>
</dbReference>
<dbReference type="SMART" id="SM00112">
    <property type="entry name" value="CA"/>
    <property type="match status" value="13"/>
</dbReference>
<dbReference type="SMART" id="SM00181">
    <property type="entry name" value="EGF"/>
    <property type="match status" value="2"/>
</dbReference>
<dbReference type="SMART" id="SM00282">
    <property type="entry name" value="LamG"/>
    <property type="match status" value="1"/>
</dbReference>
<dbReference type="SUPFAM" id="SSF49313">
    <property type="entry name" value="Cadherin-like"/>
    <property type="match status" value="13"/>
</dbReference>
<dbReference type="SUPFAM" id="SSF49899">
    <property type="entry name" value="Concanavalin A-like lectins/glucanases"/>
    <property type="match status" value="2"/>
</dbReference>
<dbReference type="PROSITE" id="PS00010">
    <property type="entry name" value="ASX_HYDROXYL"/>
    <property type="match status" value="1"/>
</dbReference>
<dbReference type="PROSITE" id="PS00232">
    <property type="entry name" value="CADHERIN_1"/>
    <property type="match status" value="8"/>
</dbReference>
<dbReference type="PROSITE" id="PS50268">
    <property type="entry name" value="CADHERIN_2"/>
    <property type="match status" value="15"/>
</dbReference>
<dbReference type="PROSITE" id="PS00018">
    <property type="entry name" value="EF_HAND_1"/>
    <property type="match status" value="1"/>
</dbReference>
<dbReference type="PROSITE" id="PS00022">
    <property type="entry name" value="EGF_1"/>
    <property type="match status" value="1"/>
</dbReference>
<dbReference type="PROSITE" id="PS01186">
    <property type="entry name" value="EGF_2"/>
    <property type="match status" value="1"/>
</dbReference>
<dbReference type="PROSITE" id="PS50026">
    <property type="entry name" value="EGF_3"/>
    <property type="match status" value="2"/>
</dbReference>
<dbReference type="PROSITE" id="PS50025">
    <property type="entry name" value="LAM_G_DOMAIN"/>
    <property type="match status" value="1"/>
</dbReference>
<accession>Q967F4</accession>
<accession>B2MZC5</accession>
<accession>H2FLJ9</accession>
<accession>H2FLK0</accession>
<accession>O44327</accession>
<sequence>MSWNILLILLISNLDEVLAKTLLKLPSNAPPGWLISDLQFQNLIGDSEIATLQPSIFSTNFEVEDGYRIITNTTVTQFHGELFELFLNVKEQNFQRLVTLHVYVDPRGTSQQPATFLSTVYHATVYTSQQPGSTVVFSKPITVRNRKNFVISPISKIDKISKYSSPFSVMTRGKSVDIVMMKQKLEEDDITRHVIFLGAFTEKTGEMIAQTKVIIDVIDSGDVHFLLKSKKSIAKFASAIPANSTVFDVEKRNLSEPLLFHLEEPSRFFKIDQFSGRVSTVLPVGYGTYHIHVVARNQKKQRSDAWLEISVKKEQKLEPMTSSRSRRHLDDIVFRIPENTTMEDIEKKDMKIPLFAGETIGEINVAKEWLKIDDDGKIHLLKPLNYEKTSSIIATVPINGLQSTRTQTIRIHVADIDEPPSFVNSPLPMLAVVPLNPTIGRIVYQFVARDEHGDGDSNVLYKTIDVIPAGSFIVDPKSGVVRTGWSKYERGDTYRISAQAMDLSPSDNTTSQLSEVAILEILADERPPQFAKQEYEVTVSEDNLVDYSVVDVKAQSFRSFEDGRSKGPITYSLEGDTPEDETKWFRIDPSTGIIHLTRLLDFDDPALPKLHKLKVTAREDNRESHVDLTIRIDDVNDNVPTFTRPLYTAQVREDIPLNQTILKVTAVDKDTGDNSRITYSVDNHNFSINSNGEISAKVRLDADQLNERHFVYRFNVTARDHGEPVSLSSSAMIHIRTENTNDESAVFLPTSQYTAFVAEDAQGGTPVIQIQARDADRDEVTYSFMDKNGRSTQKMNLFSIDEHTGLVKLRHGVSAADLAEAENPINLTVIVQDDGSCCVYPSKTHTSYATLLIGIEDVNNNKPEFPDCAKYSDIAKIMEGTYKTDPPTIVKVEATDDDSSANGDIVYSLYYTQSESRKAFVIDRQTGVLTPSPHVVFDRETRPREDVTVKATDRGDRPLIGFCQFSVEVVDINDNSPQFERPSYETSVSRFEAVGTSVITVFAFDNDAAHNAEITYSLEIDTTAGEEHQNDLDFFELVNRRSGEITLIKPIPMKTQKFIFNVIADDNGIPEALQSSAQVTLNVLDKQQKAPKWQTSPDCKPGITVDENVELNKVILRCRAVSSGDSRNSDVIYKLTASGGPGNKAESKFRQFNKFENGNEWVEVVIMEGLDYEQVNNYTLTLTATDMTSRVASTKTFVVEVRDVNDVVPQFTVDLFTGTIDEEMTPNEHLEKTNGKPIVTVKAIDTDSDGPQNEVHYRIVGEANGEETKHFRIDELTGEIFPNEKFDREKIDMYILTVEASDRSVSALPGANGPNKDNVKVQIVINDVNDNAPSFEEQKYIGRVKESEGEGHDVITIKAHDLDKHSNLRYHLIGAGGGRIPFGVRTDSGTIFVKEPLDFEASDQYHLVLIASDGRHNATTNVYIHIEDVNDNAPQFEQQKYATTVIEEDVDIPKVLFNVHATDADQDEKSSRIVYRLEGQGADEVFRIGKYSGTIELVKALDRDPPAGVPSWNFVVQAIDDDGNGLVGYADVQVNVRDINDNSPIFPERLFGYIEENREPIHSDGVYFMDVQARDFDDPTTENANIEYGIVRNKLINGESVFRIDQNTGKIFAMRSLDREISSEREFIIEVRANDRGVPSREGFANVTIKVTDMNDNAPFFEKTRYEGSVEETAPIGAAVMSFSAFDADEEAKDNVFTYQLSEESDYFYVTTDKDSKQSSVGVLRVKQPLDYEDVTQRDGFHLGIRVSDGRHDAEAAVHVALVDRNDHAPHIHGATEHRVREDVPRGTSIGRYTATDRDAGDTARFRINRQSDPKRQFTIDQDGTLRVAHTLDREDIAVYNLIIEAYDNSNNIGRQMVAVYLQDVNDNGPEPYTVPRPCIFRENTPVNQLGTCEIRATDRDTAEFGPPFTMEVSPSFKYSQYLNVIFNANGDGGNGSMTITPLQEFDREAPVPGKILEIPLILADRAGRRNEASVHVIIGDLNDNTMHDGRMTIHVNSYLGRLKETVIGRVYVDDADDWDLGDKTFSWKDSRPGFELSDKGSITMAGEMAAGTYTMSANVHDNARDEDAVGYVTVIVNAVPQIAFDNQGSVQLLIAEETPLQLPDDFIRADSNGQSLMDTFKQEMTAYMGGDVTVDVFSVQVGIATLQTRDVPVLNVRFNARGSTYRDTAQLNGLIAAHRADLQRKLNVEIVGVGIDMCKFTQCDAGCQTLNSADYDGIVVSANSTVIVGVNATSRDDCTCPVWRAPPACQHSLCHNDGVCHNTNPGFFCECRNDGLKGARCQGTTRSFGGNGFAWYKPMPACTSLNISFSFMTTQSDALLFYNGPLETLRNDTHIEYSDYIFIQLRGGRISLEVSMNGQSRSSLEVASTALNDGTWHDISVNQEGKRVELVVDNCRFLGAGADDSSCRAELYTPDDDERLNIVTPVQIGGLAPLSGQDYPQTIPRAGLNGCVRNLNVNGDQYDLATPAFEQNSEKGCRLWGATCDSNSVDSLNHCIHGDCFADVQGSGAMVAKCVCDPGWGGARCERRMEWIQFAQGAFIEYSPRIAFPEQVSDIELLFISGKVNGAPAELSFGTDSQQSYVSTNLESGQNGVTAAGKFDIGTGGRRARQELRVSEVLLKENASYWLQFTRNPTRASLSIDNAYTVSTQLDKGEPFSLQVNQITLGTQGQNKGFQGCIGTYRWSKQNLPLKRGGAMDENEESIVSISNMAGVQDGCDLRITCADLPAGYCGGSFVCVDFWKGPFCTCNDGANAILGDDGQVVGCGETLAVSKLGISSPAIILILVSLALLILLVMMMVVYTRRSPGAFENVRPEEMNRDNLRQYGVEGGGEADNDQYSMAGLRKPVMPLDTGMGPAIGGHPPHYPPRGMAPPKDDHELNSKIKDLETDQNAAPYDELRIYDDERDNISVVTLESIESAQ</sequence>
<comment type="function">
    <text evidence="15 16 17">Cadherins are calcium-dependent cell adhesion proteins (PubMed:25850673, PubMed:25938815). They preferentially interact with themselves in a homophilic manner in connecting cells; cadherins may thus contribute to the sorting of heterogeneous cell types (PubMed:25850673, PubMed:25938815). Required for adherens junction assembly and connecting adherens junctions to the cytoskeleton (PubMed:26412237).</text>
</comment>
<comment type="function">
    <text evidence="10 12 14 16 19">Isoform a is required for cell migration during body enclosure and cell shape changes during body elongation (PubMed:12847081, PubMed:9531567). Required for proper localization of other junctional components, such as hmp-1, hmp-2, jac-1 and pac-1 (PubMed:25938815, PubMed:9531567). Recruitment of pac-1 is required to establish cell polarity, independent of its role in cell adhesion (PubMed:25938815). Required for primodial germ cell ingression and adherence to endodermal cells during gastrulation (PubMed:20515680, PubMed:22675206).</text>
</comment>
<comment type="function">
    <text evidence="8">Isoform b is involved in axonal guidance in a subset of motor neurons.</text>
</comment>
<comment type="subunit">
    <text evidence="7 10 13 15 16 17">Monomer in solution (PubMed:20689042). Isoform a is a component of a core catenin-cadherin complex consisting of hmr-1, hmp-1 and hmp-2; the complex localizes to adherens junctions (PubMed:20689042, PubMed:25850673). Isoform a interacts with hmp-2; the interaction is direct (PubMed:10952315, PubMed:20689042, PubMed:25850673, PubMed:26412237). Isoform a interacts (via intracellular domain) with jac-1 (PubMed:12847081, PubMed:25938815).</text>
</comment>
<comment type="interaction">
    <interactant intactId="EBI-2528888">
        <id>Q967F4</id>
    </interactant>
    <interactant intactId="EBI-317320">
        <id>O44326</id>
        <label>hmp-2</label>
    </interactant>
    <organismsDiffer>false</organismsDiffer>
    <experiments>5</experiments>
</comment>
<comment type="interaction">
    <interactant intactId="EBI-2528888">
        <id>Q967F4</id>
    </interactant>
    <interactant intactId="EBI-2917356">
        <id>Q9U308</id>
        <label>jac-1</label>
    </interactant>
    <organismsDiffer>false</organismsDiffer>
    <experiments>3</experiments>
</comment>
<comment type="subcellular location">
    <subcellularLocation>
        <location evidence="10 16 19">Cell membrane</location>
        <topology evidence="10 19">Single-pass type I membrane protein</topology>
    </subcellularLocation>
    <subcellularLocation>
        <location evidence="10 12 15 16 17">Cell junction</location>
        <location evidence="10 12 15 16 17">Adherens junction</location>
    </subcellularLocation>
    <subcellularLocation>
        <location evidence="13">Cell junction</location>
    </subcellularLocation>
    <subcellularLocation>
        <location evidence="18">Cell projection</location>
        <location evidence="18">Dendrite</location>
    </subcellularLocation>
    <text evidence="17 18">The basal to apical translocation from the cell membrane to adherens junctions is determined by the coupled sumoylation and desumoylation state of hmr-1 (PubMed:26412237). Localizes in a grdn-1-dependent manner to the distal segment of the merging AQR dendrite (PubMed:33460640).</text>
</comment>
<comment type="subcellular location">
    <molecule>Isoform a</molecule>
    <subcellularLocation>
        <location evidence="10 15">Cell junction</location>
        <location evidence="10 15">Adherens junction</location>
    </subcellularLocation>
</comment>
<comment type="alternative products">
    <event type="alternative splicing"/>
    <isoform>
        <id>Q967F4-1</id>
        <name evidence="23">b</name>
        <sequence type="displayed"/>
    </isoform>
    <isoform>
        <id>Q967F4-2</id>
        <name evidence="22">a</name>
        <sequence type="described" ref="VSP_021978 VSP_021979"/>
    </isoform>
    <isoform>
        <id>Q967F4-4</id>
        <name evidence="24">d</name>
        <sequence type="described" ref="VSP_044151"/>
    </isoform>
    <isoform>
        <id>Q967F4-5</id>
        <name evidence="25">e</name>
        <sequence type="described" ref="VSP_044152"/>
    </isoform>
</comment>
<comment type="tissue specificity">
    <molecule>Isoform a</molecule>
    <text evidence="19">Expressed in epidermal cells (at protein level) (PubMed:9531567).</text>
</comment>
<comment type="tissue specificity">
    <molecule>Isoform b</molecule>
    <text evidence="8">Neuron-specific.</text>
</comment>
<comment type="developmental stage">
    <molecule>Isoform a</molecule>
    <text evidence="14 16 19">Expressed in all embryonic blastomeres at early stages of development (PubMed:25938815, PubMed:9531567). Expressed throughout gastrulation and in primordial germ cells (PubMed:22675206).</text>
</comment>
<comment type="developmental stage">
    <molecule>Isoform b</molecule>
    <text evidence="18">Expressed in AQR sensory neurons at the L1 larval stage.</text>
</comment>
<comment type="domain">
    <text evidence="16">The cytoplasmic domain is necessary for binding to jac-1.</text>
</comment>
<comment type="PTM">
    <text evidence="15">Phosphorylation at T-2912 increases the binding affinity for hmp-2.</text>
</comment>
<comment type="PTM">
    <text evidence="17">Sumoylated. Sumoylation prevents accumulation at adherens junctions and decreases the binding affinity for hmp-2.</text>
</comment>
<comment type="disruption phenotype">
    <text evidence="13 14 15 19">Embryonic lethal (PubMed:20689042, PubMed:25850673). Hammerhead phenotype characterized by morphogenetic defects before the start of body elongation, due to improper closure of hypodermis (PubMed:25850673, PubMed:9531567). Humpback phenotype with embryos containing dorsal humps (PubMed:20689042). Embryos also exhibit defective actin structures including loss of actin at cell-cell junctions and detached thick actin bundles called circumferential filament bundles that insert at right angles to junctional actin (PubMed:20689042). RNAi-mediated knockdown results in ingression defects in primordial germ cells (PubMed:22675206).</text>
</comment>
<comment type="sequence caution" evidence="21">
    <conflict type="erroneous initiation">
        <sequence resource="EMBL-CDS" id="AAB94553"/>
    </conflict>
    <text>Truncated N-terminus.</text>
</comment>
<protein>
    <recommendedName>
        <fullName>Cadherin-related hmr-1</fullName>
    </recommendedName>
    <alternativeName>
        <fullName>Protein Hammerhead</fullName>
    </alternativeName>
</protein>
<evidence type="ECO:0000250" key="1"/>
<evidence type="ECO:0000255" key="2"/>
<evidence type="ECO:0000255" key="3">
    <source>
        <dbReference type="PROSITE-ProRule" id="PRU00043"/>
    </source>
</evidence>
<evidence type="ECO:0000255" key="4">
    <source>
        <dbReference type="PROSITE-ProRule" id="PRU00076"/>
    </source>
</evidence>
<evidence type="ECO:0000255" key="5">
    <source>
        <dbReference type="PROSITE-ProRule" id="PRU00122"/>
    </source>
</evidence>
<evidence type="ECO:0000256" key="6">
    <source>
        <dbReference type="SAM" id="MobiDB-lite"/>
    </source>
</evidence>
<evidence type="ECO:0000269" key="7">
    <source>
    </source>
</evidence>
<evidence type="ECO:0000269" key="8">
    <source>
    </source>
</evidence>
<evidence type="ECO:0000269" key="9">
    <source>
    </source>
</evidence>
<evidence type="ECO:0000269" key="10">
    <source>
    </source>
</evidence>
<evidence type="ECO:0000269" key="11">
    <source>
    </source>
</evidence>
<evidence type="ECO:0000269" key="12">
    <source>
    </source>
</evidence>
<evidence type="ECO:0000269" key="13">
    <source>
    </source>
</evidence>
<evidence type="ECO:0000269" key="14">
    <source>
    </source>
</evidence>
<evidence type="ECO:0000269" key="15">
    <source>
    </source>
</evidence>
<evidence type="ECO:0000269" key="16">
    <source>
    </source>
</evidence>
<evidence type="ECO:0000269" key="17">
    <source>
    </source>
</evidence>
<evidence type="ECO:0000269" key="18">
    <source>
    </source>
</evidence>
<evidence type="ECO:0000269" key="19">
    <source>
    </source>
</evidence>
<evidence type="ECO:0000303" key="20">
    <source>
    </source>
</evidence>
<evidence type="ECO:0000305" key="21"/>
<evidence type="ECO:0000312" key="22">
    <source>
        <dbReference type="WormBase" id="W02B9.1a"/>
    </source>
</evidence>
<evidence type="ECO:0000312" key="23">
    <source>
        <dbReference type="WormBase" id="W02B9.1b"/>
    </source>
</evidence>
<evidence type="ECO:0000312" key="24">
    <source>
        <dbReference type="WormBase" id="W02B9.1d"/>
    </source>
</evidence>
<evidence type="ECO:0000312" key="25">
    <source>
        <dbReference type="WormBase" id="W02B9.1e"/>
    </source>
</evidence>
<evidence type="ECO:0007829" key="26">
    <source>
        <dbReference type="PDB" id="4R10"/>
    </source>
</evidence>